<proteinExistence type="inferred from homology"/>
<protein>
    <recommendedName>
        <fullName evidence="1">DNA mismatch repair protein MutH</fullName>
    </recommendedName>
    <alternativeName>
        <fullName evidence="1">Methyl-directed mismatch repair protein</fullName>
    </alternativeName>
</protein>
<accession>B8EBS0</accession>
<sequence>MNRIIPPENLPELLERAHMMAGVSLAQIAAQRGLSVPKDLKRDKGWVGQLIEMELGATAGSKPEQDFLHLGVELKTIPIDSQGRPLETTYVCVAPLSNIQGLTWQNSLVSHKLQRVLWVPVEGERHIPVGERRIGTPILWEPDPQELQLLQQDWEEIMELIALGKVEKLTARHGEVLQLRPKAANSKALTQSIAEDGSLKMTNPRGFYLKTSFTAMILNKVFG</sequence>
<feature type="chain" id="PRO_1000148403" description="DNA mismatch repair protein MutH">
    <location>
        <begin position="1"/>
        <end position="223"/>
    </location>
</feature>
<keyword id="KW-0963">Cytoplasm</keyword>
<keyword id="KW-0227">DNA damage</keyword>
<keyword id="KW-0234">DNA repair</keyword>
<keyword id="KW-0255">Endonuclease</keyword>
<keyword id="KW-0378">Hydrolase</keyword>
<keyword id="KW-0540">Nuclease</keyword>
<gene>
    <name evidence="1" type="primary">mutH</name>
    <name type="ordered locus">Sbal223_3130</name>
</gene>
<dbReference type="EMBL" id="CP001252">
    <property type="protein sequence ID" value="ACK47615.1"/>
    <property type="molecule type" value="Genomic_DNA"/>
</dbReference>
<dbReference type="RefSeq" id="WP_006080761.1">
    <property type="nucleotide sequence ID" value="NC_011663.1"/>
</dbReference>
<dbReference type="SMR" id="B8EBS0"/>
<dbReference type="KEGG" id="sbp:Sbal223_3130"/>
<dbReference type="HOGENOM" id="CLU_086669_0_0_6"/>
<dbReference type="Proteomes" id="UP000002507">
    <property type="component" value="Chromosome"/>
</dbReference>
<dbReference type="GO" id="GO:0005737">
    <property type="term" value="C:cytoplasm"/>
    <property type="evidence" value="ECO:0007669"/>
    <property type="project" value="UniProtKB-SubCell"/>
</dbReference>
<dbReference type="GO" id="GO:0003677">
    <property type="term" value="F:DNA binding"/>
    <property type="evidence" value="ECO:0007669"/>
    <property type="project" value="InterPro"/>
</dbReference>
<dbReference type="GO" id="GO:0004519">
    <property type="term" value="F:endonuclease activity"/>
    <property type="evidence" value="ECO:0007669"/>
    <property type="project" value="UniProtKB-UniRule"/>
</dbReference>
<dbReference type="GO" id="GO:0006304">
    <property type="term" value="P:DNA modification"/>
    <property type="evidence" value="ECO:0007669"/>
    <property type="project" value="InterPro"/>
</dbReference>
<dbReference type="GO" id="GO:0006298">
    <property type="term" value="P:mismatch repair"/>
    <property type="evidence" value="ECO:0007669"/>
    <property type="project" value="UniProtKB-UniRule"/>
</dbReference>
<dbReference type="CDD" id="cd00583">
    <property type="entry name" value="MutH-like"/>
    <property type="match status" value="1"/>
</dbReference>
<dbReference type="Gene3D" id="3.40.600.10">
    <property type="entry name" value="DNA mismatch repair MutH/Restriction endonuclease, type II"/>
    <property type="match status" value="1"/>
</dbReference>
<dbReference type="HAMAP" id="MF_00759">
    <property type="entry name" value="MutH"/>
    <property type="match status" value="1"/>
</dbReference>
<dbReference type="InterPro" id="IPR004230">
    <property type="entry name" value="DNA_mismatch_repair_MutH"/>
</dbReference>
<dbReference type="InterPro" id="IPR011337">
    <property type="entry name" value="DNA_rep_MutH/RE_typeII_Sau3AI"/>
</dbReference>
<dbReference type="InterPro" id="IPR037057">
    <property type="entry name" value="DNA_rep_MutH/T2_RE_sf"/>
</dbReference>
<dbReference type="InterPro" id="IPR011335">
    <property type="entry name" value="Restrct_endonuc-II-like"/>
</dbReference>
<dbReference type="NCBIfam" id="TIGR02248">
    <property type="entry name" value="mutH_TIGR"/>
    <property type="match status" value="1"/>
</dbReference>
<dbReference type="NCBIfam" id="NF003458">
    <property type="entry name" value="PRK05070.1"/>
    <property type="match status" value="1"/>
</dbReference>
<dbReference type="Pfam" id="PF02976">
    <property type="entry name" value="MutH"/>
    <property type="match status" value="1"/>
</dbReference>
<dbReference type="SMART" id="SM00927">
    <property type="entry name" value="MutH"/>
    <property type="match status" value="1"/>
</dbReference>
<dbReference type="SUPFAM" id="SSF52980">
    <property type="entry name" value="Restriction endonuclease-like"/>
    <property type="match status" value="1"/>
</dbReference>
<reference key="1">
    <citation type="submission" date="2008-12" db="EMBL/GenBank/DDBJ databases">
        <title>Complete sequence of chromosome of Shewanella baltica OS223.</title>
        <authorList>
            <consortium name="US DOE Joint Genome Institute"/>
            <person name="Lucas S."/>
            <person name="Copeland A."/>
            <person name="Lapidus A."/>
            <person name="Glavina del Rio T."/>
            <person name="Dalin E."/>
            <person name="Tice H."/>
            <person name="Bruce D."/>
            <person name="Goodwin L."/>
            <person name="Pitluck S."/>
            <person name="Chertkov O."/>
            <person name="Meincke L."/>
            <person name="Brettin T."/>
            <person name="Detter J.C."/>
            <person name="Han C."/>
            <person name="Kuske C.R."/>
            <person name="Larimer F."/>
            <person name="Land M."/>
            <person name="Hauser L."/>
            <person name="Kyrpides N."/>
            <person name="Ovchinnikova G."/>
            <person name="Brettar I."/>
            <person name="Rodrigues J."/>
            <person name="Konstantinidis K."/>
            <person name="Tiedje J."/>
        </authorList>
    </citation>
    <scope>NUCLEOTIDE SEQUENCE [LARGE SCALE GENOMIC DNA]</scope>
    <source>
        <strain>OS223</strain>
    </source>
</reference>
<name>MUTH_SHEB2</name>
<comment type="function">
    <text evidence="1">Sequence-specific endonuclease that cleaves unmethylated GATC sequences. It is involved in DNA mismatch repair.</text>
</comment>
<comment type="subcellular location">
    <subcellularLocation>
        <location evidence="1">Cytoplasm</location>
    </subcellularLocation>
</comment>
<comment type="similarity">
    <text evidence="1">Belongs to the MutH family.</text>
</comment>
<evidence type="ECO:0000255" key="1">
    <source>
        <dbReference type="HAMAP-Rule" id="MF_00759"/>
    </source>
</evidence>
<organism>
    <name type="scientific">Shewanella baltica (strain OS223)</name>
    <dbReference type="NCBI Taxonomy" id="407976"/>
    <lineage>
        <taxon>Bacteria</taxon>
        <taxon>Pseudomonadati</taxon>
        <taxon>Pseudomonadota</taxon>
        <taxon>Gammaproteobacteria</taxon>
        <taxon>Alteromonadales</taxon>
        <taxon>Shewanellaceae</taxon>
        <taxon>Shewanella</taxon>
    </lineage>
</organism>